<name>IF4G1_WHEAT</name>
<comment type="subunit">
    <text>EIF4F is a multi-subunit complex, the composition of which varies with external and internal environmental conditions. It is composed of at least EIF4A, EIF4E and EIF4G. In higher plants two isoforms of EIF4F have been identified, named isoform EIF4F and isoform EIF(iso)4F. Isoform EIF4F has subunits p220 and p26, whereas isoform EIF(iso)4F has subunits p82 and p28. Two forms of p82 have been identified, p82-34 and p82-16.</text>
</comment>
<comment type="similarity">
    <text evidence="3">Belongs to the eukaryotic initiation factor 4G family.</text>
</comment>
<keyword id="KW-0903">Direct protein sequencing</keyword>
<keyword id="KW-0396">Initiation factor</keyword>
<keyword id="KW-0648">Protein biosynthesis</keyword>
<keyword id="KW-1185">Reference proteome</keyword>
<keyword id="KW-0810">Translation regulation</keyword>
<protein>
    <recommendedName>
        <fullName>Eukaryotic translation initiation factor isoform 4G-1</fullName>
        <shortName>eIF(iso)-4G-1</shortName>
        <shortName>eIF(iso)4G-1</shortName>
    </recommendedName>
    <alternativeName>
        <fullName>Eukaryotic initiation factor iso-4F subunit p82-34</fullName>
        <shortName>eIF-(iso)4F p82-34 subunit</shortName>
    </alternativeName>
</protein>
<feature type="chain" id="PRO_0000213334" description="Eukaryotic translation initiation factor isoform 4G-1">
    <location>
        <begin position="1"/>
        <end position="788"/>
    </location>
</feature>
<feature type="domain" description="MIF4G" evidence="1">
    <location>
        <begin position="211"/>
        <end position="436"/>
    </location>
</feature>
<feature type="domain" description="MI" evidence="1">
    <location>
        <begin position="622"/>
        <end position="744"/>
    </location>
</feature>
<feature type="region of interest" description="Disordered" evidence="2">
    <location>
        <begin position="1"/>
        <end position="21"/>
    </location>
</feature>
<feature type="region of interest" description="Disordered" evidence="2">
    <location>
        <begin position="113"/>
        <end position="197"/>
    </location>
</feature>
<feature type="region of interest" description="Disordered" evidence="2">
    <location>
        <begin position="472"/>
        <end position="608"/>
    </location>
</feature>
<feature type="compositionally biased region" description="Gly residues" evidence="2">
    <location>
        <begin position="12"/>
        <end position="21"/>
    </location>
</feature>
<feature type="compositionally biased region" description="Low complexity" evidence="2">
    <location>
        <begin position="113"/>
        <end position="122"/>
    </location>
</feature>
<feature type="compositionally biased region" description="Basic and acidic residues" evidence="2">
    <location>
        <begin position="126"/>
        <end position="139"/>
    </location>
</feature>
<feature type="compositionally biased region" description="Basic and acidic residues" evidence="2">
    <location>
        <begin position="146"/>
        <end position="159"/>
    </location>
</feature>
<feature type="compositionally biased region" description="Polar residues" evidence="2">
    <location>
        <begin position="161"/>
        <end position="182"/>
    </location>
</feature>
<feature type="compositionally biased region" description="Low complexity" evidence="2">
    <location>
        <begin position="498"/>
        <end position="511"/>
    </location>
</feature>
<feature type="compositionally biased region" description="Low complexity" evidence="2">
    <location>
        <begin position="578"/>
        <end position="605"/>
    </location>
</feature>
<evidence type="ECO:0000255" key="1">
    <source>
        <dbReference type="PROSITE-ProRule" id="PRU00698"/>
    </source>
</evidence>
<evidence type="ECO:0000256" key="2">
    <source>
        <dbReference type="SAM" id="MobiDB-lite"/>
    </source>
</evidence>
<evidence type="ECO:0000305" key="3"/>
<reference key="1">
    <citation type="journal article" date="1992" name="J. Biol. Chem.">
        <title>Isolation and sequence of the cDNAs encoding the subunits of the isozyme form of wheat protein synthesis initiation factor 4F.</title>
        <authorList>
            <person name="Allen M.L."/>
            <person name="Metz A.M."/>
            <person name="Timmer R.T."/>
            <person name="Rhoads R.E."/>
            <person name="Browning K.S."/>
        </authorList>
    </citation>
    <scope>NUCLEOTIDE SEQUENCE [MRNA]</scope>
    <scope>PROTEIN SEQUENCE OF 193-200; 255-284; 411-419; 448-458 AND 681-688</scope>
    <source>
        <tissue>Root tip</tissue>
    </source>
</reference>
<reference key="2">
    <citation type="submission" date="1992-12" db="EMBL/GenBank/DDBJ databases">
        <authorList>
            <person name="Metz A.M."/>
        </authorList>
    </citation>
    <scope>SEQUENCE REVISION</scope>
</reference>
<sequence length="788" mass="86295">MTTDQPVISLRPGGGGGGPRGGRLFAPAFAVAASGSGDFLRPHGGGASGVSRIGDLHSESRERVRYSRDQLLDLRKITDVTEQILRLQQEIEAELNGDDQSWVRNDSNVQLQTQAQPQVQAQNRFTETDNRDWRARTEKPPAPAVQEEKSWDNIREVKEQYNASGRQQEQFNRQDQSSSQKAQVGPPPALIKADVPWSARRGNLSEKDRVLKTVKGILNKLTPEKFDLLKGQLLDSGITTADILKDVISLIFEKAVFEPTFCPMYAQLCSELNDNLPTFPSEEPGGKEITFKRVLLNNCQEAFEGADSLRVEIASLTGPDQEMEKRDKERIFKLRTLGNIRLIGELLKQKMVPEKIVHHIVKELLGSDKKACPDEEHVEAICQFFNTIGKQLDENPKSRRINDTYFVQIRELVANPQLTPRSKFMVRDLIDLRSNNWVPRRAEIKAKTISEIHTEAEKNLGLRPGATANMRNGRNAPGGPLSPGGFSVNRPGTGGMMPGMPGSRKMPGMPGLDNDNWEVQRSRSMPRGDPLRNQGPLINKVPSINKPSPINPRLLPQGTGALIGKSALLGTGGPPSRPSSLTASPTPLPAQTTASPKPSSATPASVPIPDKAASSAKVIPAGLQKKTASLLEEYFGIRILDEAQQCIEELQSPDYHPEIVKEAINLALDKGASFVDPLVKLLEHLYTKKTFKTEDLENGCLLYGSLLEDIGIDLPKAPTQFGEVVARLILSCGLRFEAAEGILKAMEDTFFRKAIFTSVTKTLGADPAGQAILSSHAAVVDACNSLSI</sequence>
<organism>
    <name type="scientific">Triticum aestivum</name>
    <name type="common">Wheat</name>
    <dbReference type="NCBI Taxonomy" id="4565"/>
    <lineage>
        <taxon>Eukaryota</taxon>
        <taxon>Viridiplantae</taxon>
        <taxon>Streptophyta</taxon>
        <taxon>Embryophyta</taxon>
        <taxon>Tracheophyta</taxon>
        <taxon>Spermatophyta</taxon>
        <taxon>Magnoliopsida</taxon>
        <taxon>Liliopsida</taxon>
        <taxon>Poales</taxon>
        <taxon>Poaceae</taxon>
        <taxon>BOP clade</taxon>
        <taxon>Pooideae</taxon>
        <taxon>Triticodae</taxon>
        <taxon>Triticeae</taxon>
        <taxon>Triticinae</taxon>
        <taxon>Triticum</taxon>
    </lineage>
</organism>
<proteinExistence type="evidence at protein level"/>
<accession>Q03387</accession>
<dbReference type="EMBL" id="M95747">
    <property type="protein sequence ID" value="AAA16209.1"/>
    <property type="molecule type" value="mRNA"/>
</dbReference>
<dbReference type="PIR" id="A44452">
    <property type="entry name" value="A44452"/>
</dbReference>
<dbReference type="RefSeq" id="NP_001414887.1">
    <property type="nucleotide sequence ID" value="NM_001427958.1"/>
</dbReference>
<dbReference type="SMR" id="Q03387"/>
<dbReference type="ELM" id="Q03387"/>
<dbReference type="STRING" id="4565.Q03387"/>
<dbReference type="EnsemblPlants" id="TraesARI2D03G01239780.1">
    <property type="protein sequence ID" value="TraesARI2D03G01239780.1"/>
    <property type="gene ID" value="TraesARI2D03G01239780"/>
</dbReference>
<dbReference type="EnsemblPlants" id="TraesCAD_scaffold_026722_01G000100.1">
    <property type="protein sequence ID" value="TraesCAD_scaffold_026722_01G000100.1"/>
    <property type="gene ID" value="TraesCAD_scaffold_026722_01G000100"/>
</dbReference>
<dbReference type="EnsemblPlants" id="TraesCLE_scaffold_010819_01G000100.1">
    <property type="protein sequence ID" value="TraesCLE_scaffold_010819_01G000100.1"/>
    <property type="gene ID" value="TraesCLE_scaffold_010819_01G000100"/>
</dbReference>
<dbReference type="EnsemblPlants" id="TraesCS2D02G353600.1">
    <property type="protein sequence ID" value="TraesCS2D02G353600.1"/>
    <property type="gene ID" value="TraesCS2D02G353600"/>
</dbReference>
<dbReference type="EnsemblPlants" id="TraesCS2D03G0809000.1">
    <property type="protein sequence ID" value="TraesCS2D03G0809000.1.CDS"/>
    <property type="gene ID" value="TraesCS2D03G0809000"/>
</dbReference>
<dbReference type="EnsemblPlants" id="TraesJAG2D03G01229740.1">
    <property type="protein sequence ID" value="TraesJAG2D03G01229740.1"/>
    <property type="gene ID" value="TraesJAG2D03G01229740"/>
</dbReference>
<dbReference type="EnsemblPlants" id="TraesJUL2D03G01229930.1">
    <property type="protein sequence ID" value="TraesJUL2D03G01229930.1"/>
    <property type="gene ID" value="TraesJUL2D03G01229930"/>
</dbReference>
<dbReference type="EnsemblPlants" id="TraesKAR2D01G0327360.1">
    <property type="protein sequence ID" value="cds.TraesKAR2D01G0327360.1"/>
    <property type="gene ID" value="TraesKAR2D01G0327360"/>
</dbReference>
<dbReference type="EnsemblPlants" id="TraesLAC2D03G01175140.1">
    <property type="protein sequence ID" value="TraesLAC2D03G01175140.1"/>
    <property type="gene ID" value="TraesLAC2D03G01175140"/>
</dbReference>
<dbReference type="EnsemblPlants" id="TraesLDM2D03G01224500.1">
    <property type="protein sequence ID" value="TraesLDM2D03G01224500.1"/>
    <property type="gene ID" value="TraesLDM2D03G01224500"/>
</dbReference>
<dbReference type="EnsemblPlants" id="TraesMAC2D03G01221620.1">
    <property type="protein sequence ID" value="TraesMAC2D03G01221620.1"/>
    <property type="gene ID" value="TraesMAC2D03G01221620"/>
</dbReference>
<dbReference type="EnsemblPlants" id="TraesNOR2D03G01239860.1">
    <property type="protein sequence ID" value="TraesNOR2D03G01239860.1"/>
    <property type="gene ID" value="TraesNOR2D03G01239860"/>
</dbReference>
<dbReference type="EnsemblPlants" id="TraesPARA_EIv1.0_0712580.1">
    <property type="protein sequence ID" value="TraesPARA_EIv1.0_0712580.1.CDS"/>
    <property type="gene ID" value="TraesPARA_EIv1.0_0712580"/>
</dbReference>
<dbReference type="EnsemblPlants" id="TraesROB_scaffold_010397_01G000400.1">
    <property type="protein sequence ID" value="TraesROB_scaffold_010397_01G000400.1"/>
    <property type="gene ID" value="TraesROB_scaffold_010397_01G000400"/>
</dbReference>
<dbReference type="EnsemblPlants" id="TraesSTA2D03G01212310.1">
    <property type="protein sequence ID" value="TraesSTA2D03G01212310.1"/>
    <property type="gene ID" value="TraesSTA2D03G01212310"/>
</dbReference>
<dbReference type="EnsemblPlants" id="TraesSYM2D03G01239040.1">
    <property type="protein sequence ID" value="TraesSYM2D03G01239040.1"/>
    <property type="gene ID" value="TraesSYM2D03G01239040"/>
</dbReference>
<dbReference type="EnsemblPlants" id="TraesWEE_scaffold_021246_01G000100.1">
    <property type="protein sequence ID" value="TraesWEE_scaffold_021246_01G000100.1"/>
    <property type="gene ID" value="TraesWEE_scaffold_021246_01G000100"/>
</dbReference>
<dbReference type="GeneID" id="543222"/>
<dbReference type="Gramene" id="TraesARI2D03G01239780.1">
    <property type="protein sequence ID" value="TraesARI2D03G01239780.1"/>
    <property type="gene ID" value="TraesARI2D03G01239780"/>
</dbReference>
<dbReference type="Gramene" id="TraesCAD_scaffold_026722_01G000100.1">
    <property type="protein sequence ID" value="TraesCAD_scaffold_026722_01G000100.1"/>
    <property type="gene ID" value="TraesCAD_scaffold_026722_01G000100"/>
</dbReference>
<dbReference type="Gramene" id="TraesCLE_scaffold_010819_01G000100.1">
    <property type="protein sequence ID" value="TraesCLE_scaffold_010819_01G000100.1"/>
    <property type="gene ID" value="TraesCLE_scaffold_010819_01G000100"/>
</dbReference>
<dbReference type="Gramene" id="TraesCS2D02G353600.1">
    <property type="protein sequence ID" value="TraesCS2D02G353600.1"/>
    <property type="gene ID" value="TraesCS2D02G353600"/>
</dbReference>
<dbReference type="Gramene" id="TraesCS2D03G0809000.1">
    <property type="protein sequence ID" value="TraesCS2D03G0809000.1.CDS"/>
    <property type="gene ID" value="TraesCS2D03G0809000"/>
</dbReference>
<dbReference type="Gramene" id="TraesJAG2D03G01229740.1">
    <property type="protein sequence ID" value="TraesJAG2D03G01229740.1"/>
    <property type="gene ID" value="TraesJAG2D03G01229740"/>
</dbReference>
<dbReference type="Gramene" id="TraesJUL2D03G01229930.1">
    <property type="protein sequence ID" value="TraesJUL2D03G01229930.1"/>
    <property type="gene ID" value="TraesJUL2D03G01229930"/>
</dbReference>
<dbReference type="Gramene" id="TraesKAR2D01G0327360.1">
    <property type="protein sequence ID" value="cds.TraesKAR2D01G0327360.1"/>
    <property type="gene ID" value="TraesKAR2D01G0327360"/>
</dbReference>
<dbReference type="Gramene" id="TraesLAC2D03G01175140.1">
    <property type="protein sequence ID" value="TraesLAC2D03G01175140.1"/>
    <property type="gene ID" value="TraesLAC2D03G01175140"/>
</dbReference>
<dbReference type="Gramene" id="TraesLDM2D03G01224500.1">
    <property type="protein sequence ID" value="TraesLDM2D03G01224500.1"/>
    <property type="gene ID" value="TraesLDM2D03G01224500"/>
</dbReference>
<dbReference type="Gramene" id="TraesMAC2D03G01221620.1">
    <property type="protein sequence ID" value="TraesMAC2D03G01221620.1"/>
    <property type="gene ID" value="TraesMAC2D03G01221620"/>
</dbReference>
<dbReference type="Gramene" id="TraesNOR2D03G01239860.1">
    <property type="protein sequence ID" value="TraesNOR2D03G01239860.1"/>
    <property type="gene ID" value="TraesNOR2D03G01239860"/>
</dbReference>
<dbReference type="Gramene" id="TraesPARA_EIv1.0_0712580.1">
    <property type="protein sequence ID" value="TraesPARA_EIv1.0_0712580.1.CDS"/>
    <property type="gene ID" value="TraesPARA_EIv1.0_0712580"/>
</dbReference>
<dbReference type="Gramene" id="TraesROB_scaffold_010397_01G000400.1">
    <property type="protein sequence ID" value="TraesROB_scaffold_010397_01G000400.1"/>
    <property type="gene ID" value="TraesROB_scaffold_010397_01G000400"/>
</dbReference>
<dbReference type="Gramene" id="TraesSTA2D03G01212310.1">
    <property type="protein sequence ID" value="TraesSTA2D03G01212310.1"/>
    <property type="gene ID" value="TraesSTA2D03G01212310"/>
</dbReference>
<dbReference type="Gramene" id="TraesSYM2D03G01239040.1">
    <property type="protein sequence ID" value="TraesSYM2D03G01239040.1"/>
    <property type="gene ID" value="TraesSYM2D03G01239040"/>
</dbReference>
<dbReference type="Gramene" id="TraesWEE_scaffold_021246_01G000100.1">
    <property type="protein sequence ID" value="TraesWEE_scaffold_021246_01G000100.1"/>
    <property type="gene ID" value="TraesWEE_scaffold_021246_01G000100"/>
</dbReference>
<dbReference type="eggNOG" id="KOG0401">
    <property type="taxonomic scope" value="Eukaryota"/>
</dbReference>
<dbReference type="OMA" id="RSAQFPP"/>
<dbReference type="OrthoDB" id="514777at2759"/>
<dbReference type="Proteomes" id="UP000019116">
    <property type="component" value="Chromosome 2D"/>
</dbReference>
<dbReference type="ExpressionAtlas" id="Q03387">
    <property type="expression patterns" value="baseline and differential"/>
</dbReference>
<dbReference type="GO" id="GO:0016281">
    <property type="term" value="C:eukaryotic translation initiation factor 4F complex"/>
    <property type="evidence" value="ECO:0000318"/>
    <property type="project" value="GO_Central"/>
</dbReference>
<dbReference type="GO" id="GO:0003729">
    <property type="term" value="F:mRNA binding"/>
    <property type="evidence" value="ECO:0000318"/>
    <property type="project" value="GO_Central"/>
</dbReference>
<dbReference type="GO" id="GO:0003743">
    <property type="term" value="F:translation initiation factor activity"/>
    <property type="evidence" value="ECO:0000318"/>
    <property type="project" value="GO_Central"/>
</dbReference>
<dbReference type="GO" id="GO:0006417">
    <property type="term" value="P:regulation of translation"/>
    <property type="evidence" value="ECO:0007669"/>
    <property type="project" value="UniProtKB-KW"/>
</dbReference>
<dbReference type="GO" id="GO:0006413">
    <property type="term" value="P:translational initiation"/>
    <property type="evidence" value="ECO:0000318"/>
    <property type="project" value="GO_Central"/>
</dbReference>
<dbReference type="FunFam" id="1.25.40.180:FF:000027">
    <property type="entry name" value="Eukaryotic translation initiation factor isoform 4G-2"/>
    <property type="match status" value="1"/>
</dbReference>
<dbReference type="FunFam" id="1.25.40.180:FF:000036">
    <property type="entry name" value="Eukaryotic translation initiation factor isoform 4G-2"/>
    <property type="match status" value="1"/>
</dbReference>
<dbReference type="Gene3D" id="1.25.40.180">
    <property type="match status" value="2"/>
</dbReference>
<dbReference type="InterPro" id="IPR016024">
    <property type="entry name" value="ARM-type_fold"/>
</dbReference>
<dbReference type="InterPro" id="IPR003891">
    <property type="entry name" value="Initiation_fac_eIF4g_MI"/>
</dbReference>
<dbReference type="InterPro" id="IPR003890">
    <property type="entry name" value="MIF4G-like_typ-3"/>
</dbReference>
<dbReference type="PANTHER" id="PTHR23253">
    <property type="entry name" value="EUKARYOTIC TRANSLATION INITIATION FACTOR 4 GAMMA"/>
    <property type="match status" value="1"/>
</dbReference>
<dbReference type="PANTHER" id="PTHR23253:SF81">
    <property type="entry name" value="EUKARYOTIC TRANSLATION INITIATION FACTOR ISOFORM 4G-1"/>
    <property type="match status" value="1"/>
</dbReference>
<dbReference type="Pfam" id="PF02847">
    <property type="entry name" value="MA3"/>
    <property type="match status" value="1"/>
</dbReference>
<dbReference type="Pfam" id="PF02854">
    <property type="entry name" value="MIF4G"/>
    <property type="match status" value="1"/>
</dbReference>
<dbReference type="SMART" id="SM00544">
    <property type="entry name" value="MA3"/>
    <property type="match status" value="1"/>
</dbReference>
<dbReference type="SMART" id="SM00543">
    <property type="entry name" value="MIF4G"/>
    <property type="match status" value="1"/>
</dbReference>
<dbReference type="SUPFAM" id="SSF48371">
    <property type="entry name" value="ARM repeat"/>
    <property type="match status" value="2"/>
</dbReference>
<dbReference type="PROSITE" id="PS51366">
    <property type="entry name" value="MI"/>
    <property type="match status" value="1"/>
</dbReference>